<comment type="function">
    <text evidence="1">Catalyzes the reversible adenylation of nicotinate mononucleotide (NaMN) to nicotinic acid adenine dinucleotide (NaAD).</text>
</comment>
<comment type="catalytic activity">
    <reaction evidence="1">
        <text>nicotinate beta-D-ribonucleotide + ATP + H(+) = deamido-NAD(+) + diphosphate</text>
        <dbReference type="Rhea" id="RHEA:22860"/>
        <dbReference type="ChEBI" id="CHEBI:15378"/>
        <dbReference type="ChEBI" id="CHEBI:30616"/>
        <dbReference type="ChEBI" id="CHEBI:33019"/>
        <dbReference type="ChEBI" id="CHEBI:57502"/>
        <dbReference type="ChEBI" id="CHEBI:58437"/>
        <dbReference type="EC" id="2.7.7.18"/>
    </reaction>
</comment>
<comment type="pathway">
    <text evidence="1">Cofactor biosynthesis; NAD(+) biosynthesis; deamido-NAD(+) from nicotinate D-ribonucleotide: step 1/1.</text>
</comment>
<comment type="similarity">
    <text evidence="1">Belongs to the NadD family.</text>
</comment>
<gene>
    <name evidence="1" type="primary">nadD</name>
    <name type="ordered locus">RL4684</name>
</gene>
<sequence>MPHSERGMVVGLFGGSFNPPHQGHALVAEIAIKRLRLDQLWWMVTPGNPLKSRNQLAPLAERLAESERVAADPRIKVTAFEQTLGTSYTANTLARVKARNPHVHFIWIMGADSLQTFHKWQKWQEIARTFPIAVIDRPGATLSFLSSKMARTFGFARVDEDDARVLWKKRAPAWTFIHGPRSGLSSTAIRNGSSHSDAE</sequence>
<organism>
    <name type="scientific">Rhizobium johnstonii (strain DSM 114642 / LMG 32736 / 3841)</name>
    <name type="common">Rhizobium leguminosarum bv. viciae</name>
    <dbReference type="NCBI Taxonomy" id="216596"/>
    <lineage>
        <taxon>Bacteria</taxon>
        <taxon>Pseudomonadati</taxon>
        <taxon>Pseudomonadota</taxon>
        <taxon>Alphaproteobacteria</taxon>
        <taxon>Hyphomicrobiales</taxon>
        <taxon>Rhizobiaceae</taxon>
        <taxon>Rhizobium/Agrobacterium group</taxon>
        <taxon>Rhizobium</taxon>
        <taxon>Rhizobium johnstonii</taxon>
    </lineage>
</organism>
<feature type="chain" id="PRO_0000336726" description="Probable nicotinate-nucleotide adenylyltransferase">
    <location>
        <begin position="1"/>
        <end position="199"/>
    </location>
</feature>
<keyword id="KW-0067">ATP-binding</keyword>
<keyword id="KW-0520">NAD</keyword>
<keyword id="KW-0547">Nucleotide-binding</keyword>
<keyword id="KW-0548">Nucleotidyltransferase</keyword>
<keyword id="KW-0662">Pyridine nucleotide biosynthesis</keyword>
<keyword id="KW-0808">Transferase</keyword>
<name>NADD_RHIJ3</name>
<evidence type="ECO:0000255" key="1">
    <source>
        <dbReference type="HAMAP-Rule" id="MF_00244"/>
    </source>
</evidence>
<reference key="1">
    <citation type="journal article" date="2006" name="Genome Biol.">
        <title>The genome of Rhizobium leguminosarum has recognizable core and accessory components.</title>
        <authorList>
            <person name="Young J.P.W."/>
            <person name="Crossman L.C."/>
            <person name="Johnston A.W.B."/>
            <person name="Thomson N.R."/>
            <person name="Ghazoui Z.F."/>
            <person name="Hull K.H."/>
            <person name="Wexler M."/>
            <person name="Curson A.R.J."/>
            <person name="Todd J.D."/>
            <person name="Poole P.S."/>
            <person name="Mauchline T.H."/>
            <person name="East A.K."/>
            <person name="Quail M.A."/>
            <person name="Churcher C."/>
            <person name="Arrowsmith C."/>
            <person name="Cherevach I."/>
            <person name="Chillingworth T."/>
            <person name="Clarke K."/>
            <person name="Cronin A."/>
            <person name="Davis P."/>
            <person name="Fraser A."/>
            <person name="Hance Z."/>
            <person name="Hauser H."/>
            <person name="Jagels K."/>
            <person name="Moule S."/>
            <person name="Mungall K."/>
            <person name="Norbertczak H."/>
            <person name="Rabbinowitsch E."/>
            <person name="Sanders M."/>
            <person name="Simmonds M."/>
            <person name="Whitehead S."/>
            <person name="Parkhill J."/>
        </authorList>
    </citation>
    <scope>NUCLEOTIDE SEQUENCE [LARGE SCALE GENOMIC DNA]</scope>
    <source>
        <strain>DSM 114642 / LMG 32736 / 3841</strain>
    </source>
</reference>
<proteinExistence type="inferred from homology"/>
<dbReference type="EC" id="2.7.7.18" evidence="1"/>
<dbReference type="EMBL" id="AM236080">
    <property type="protein sequence ID" value="CAK10167.1"/>
    <property type="molecule type" value="Genomic_DNA"/>
</dbReference>
<dbReference type="SMR" id="Q1MA73"/>
<dbReference type="EnsemblBacteria" id="CAK10167">
    <property type="protein sequence ID" value="CAK10167"/>
    <property type="gene ID" value="RL4684"/>
</dbReference>
<dbReference type="KEGG" id="rle:RL4684"/>
<dbReference type="eggNOG" id="COG1057">
    <property type="taxonomic scope" value="Bacteria"/>
</dbReference>
<dbReference type="HOGENOM" id="CLU_069765_2_0_5"/>
<dbReference type="UniPathway" id="UPA00253">
    <property type="reaction ID" value="UER00332"/>
</dbReference>
<dbReference type="Proteomes" id="UP000006575">
    <property type="component" value="Chromosome"/>
</dbReference>
<dbReference type="GO" id="GO:0005524">
    <property type="term" value="F:ATP binding"/>
    <property type="evidence" value="ECO:0007669"/>
    <property type="project" value="UniProtKB-KW"/>
</dbReference>
<dbReference type="GO" id="GO:0004515">
    <property type="term" value="F:nicotinate-nucleotide adenylyltransferase activity"/>
    <property type="evidence" value="ECO:0007669"/>
    <property type="project" value="UniProtKB-UniRule"/>
</dbReference>
<dbReference type="GO" id="GO:0009435">
    <property type="term" value="P:NAD biosynthetic process"/>
    <property type="evidence" value="ECO:0007669"/>
    <property type="project" value="UniProtKB-UniRule"/>
</dbReference>
<dbReference type="CDD" id="cd02165">
    <property type="entry name" value="NMNAT"/>
    <property type="match status" value="1"/>
</dbReference>
<dbReference type="Gene3D" id="3.40.50.620">
    <property type="entry name" value="HUPs"/>
    <property type="match status" value="1"/>
</dbReference>
<dbReference type="HAMAP" id="MF_00244">
    <property type="entry name" value="NaMN_adenylyltr"/>
    <property type="match status" value="1"/>
</dbReference>
<dbReference type="InterPro" id="IPR004821">
    <property type="entry name" value="Cyt_trans-like"/>
</dbReference>
<dbReference type="InterPro" id="IPR005248">
    <property type="entry name" value="NadD/NMNAT"/>
</dbReference>
<dbReference type="InterPro" id="IPR014729">
    <property type="entry name" value="Rossmann-like_a/b/a_fold"/>
</dbReference>
<dbReference type="NCBIfam" id="TIGR00482">
    <property type="entry name" value="nicotinate (nicotinamide) nucleotide adenylyltransferase"/>
    <property type="match status" value="1"/>
</dbReference>
<dbReference type="NCBIfam" id="NF000843">
    <property type="entry name" value="PRK00071.2-2"/>
    <property type="match status" value="1"/>
</dbReference>
<dbReference type="NCBIfam" id="NF000845">
    <property type="entry name" value="PRK00071.2-4"/>
    <property type="match status" value="1"/>
</dbReference>
<dbReference type="PANTHER" id="PTHR39321">
    <property type="entry name" value="NICOTINATE-NUCLEOTIDE ADENYLYLTRANSFERASE-RELATED"/>
    <property type="match status" value="1"/>
</dbReference>
<dbReference type="PANTHER" id="PTHR39321:SF3">
    <property type="entry name" value="PHOSPHOPANTETHEINE ADENYLYLTRANSFERASE"/>
    <property type="match status" value="1"/>
</dbReference>
<dbReference type="Pfam" id="PF01467">
    <property type="entry name" value="CTP_transf_like"/>
    <property type="match status" value="1"/>
</dbReference>
<dbReference type="SUPFAM" id="SSF52374">
    <property type="entry name" value="Nucleotidylyl transferase"/>
    <property type="match status" value="1"/>
</dbReference>
<accession>Q1MA73</accession>
<protein>
    <recommendedName>
        <fullName evidence="1">Probable nicotinate-nucleotide adenylyltransferase</fullName>
        <ecNumber evidence="1">2.7.7.18</ecNumber>
    </recommendedName>
    <alternativeName>
        <fullName evidence="1">Deamido-NAD(+) diphosphorylase</fullName>
    </alternativeName>
    <alternativeName>
        <fullName evidence="1">Deamido-NAD(+) pyrophosphorylase</fullName>
    </alternativeName>
    <alternativeName>
        <fullName evidence="1">Nicotinate mononucleotide adenylyltransferase</fullName>
        <shortName evidence="1">NaMN adenylyltransferase</shortName>
    </alternativeName>
</protein>